<protein>
    <recommendedName>
        <fullName evidence="12">Cinnamoyl-CoA reductase 1</fullName>
        <shortName evidence="12">AtCCR1</shortName>
        <ecNumber evidence="6">1.2.1.44</ecNumber>
    </recommendedName>
    <alternativeName>
        <fullName evidence="13">Protein IRREGULAR XYLEM 4</fullName>
    </alternativeName>
</protein>
<keyword id="KW-0025">Alternative splicing</keyword>
<keyword id="KW-1015">Disulfide bond</keyword>
<keyword id="KW-0438">Lignin biosynthesis</keyword>
<keyword id="KW-0521">NADP</keyword>
<keyword id="KW-0560">Oxidoreductase</keyword>
<keyword id="KW-0597">Phosphoprotein</keyword>
<keyword id="KW-1185">Reference proteome</keyword>
<sequence>MPVDVASPAGKTVCVTGAGGYIASWIVKILLERGYTVKGTVRNPDDPKNTHLRELEGGKERLILCKADLQDYEALKAAIDGCDGVFHTASPVTDDPEQMVEPAVNGAKFVINAAAEAKVKRVVITSSIGAVYMDPNRDPEAVVDESCWSDLDFCKNTKNWYCYGKMVAEQAAWETAKEKGVDLVVLNPVLVLGPPLQPTINASLYHVLKYLTGSAKTYANLTQAYVDVRDVALAHVLVYEAPSASGRYLLAESARHRGEVVEILAKLFPEYPLPTKCKDEKNPRAKPYKFTNQKIKDLGLEFTSTKQSLYDTVKSLQEKGHLAPPPPPPSASQESVENGIKIGS</sequence>
<name>CCR1_ARATH</name>
<dbReference type="EC" id="1.2.1.44" evidence="6"/>
<dbReference type="EMBL" id="AF320624">
    <property type="protein sequence ID" value="AAG46037.1"/>
    <property type="molecule type" value="mRNA"/>
</dbReference>
<dbReference type="EMBL" id="AY743921">
    <property type="protein sequence ID" value="AAU45042.1"/>
    <property type="molecule type" value="mRNA"/>
</dbReference>
<dbReference type="EMBL" id="AC010924">
    <property type="protein sequence ID" value="AAF18492.1"/>
    <property type="molecule type" value="Genomic_DNA"/>
</dbReference>
<dbReference type="EMBL" id="CP002684">
    <property type="protein sequence ID" value="AEE29388.1"/>
    <property type="molecule type" value="Genomic_DNA"/>
</dbReference>
<dbReference type="EMBL" id="CP002684">
    <property type="protein sequence ID" value="ANM59759.1"/>
    <property type="molecule type" value="Genomic_DNA"/>
</dbReference>
<dbReference type="EMBL" id="AF332459">
    <property type="protein sequence ID" value="AAG48822.1"/>
    <property type="molecule type" value="mRNA"/>
</dbReference>
<dbReference type="EMBL" id="AF321114">
    <property type="protein sequence ID" value="AAL37194.1"/>
    <property type="molecule type" value="mRNA"/>
</dbReference>
<dbReference type="EMBL" id="AK228419">
    <property type="protein sequence ID" value="BAF00353.1"/>
    <property type="molecule type" value="mRNA"/>
</dbReference>
<dbReference type="EMBL" id="AY087316">
    <property type="protein sequence ID" value="AAM64866.1"/>
    <property type="molecule type" value="mRNA"/>
</dbReference>
<dbReference type="PIR" id="A86294">
    <property type="entry name" value="A86294"/>
</dbReference>
<dbReference type="RefSeq" id="NP_001319013.1">
    <molecule id="Q9S9N9-1"/>
    <property type="nucleotide sequence ID" value="NM_001332191.1"/>
</dbReference>
<dbReference type="RefSeq" id="NP_173047.1">
    <molecule id="Q9S9N9-1"/>
    <property type="nucleotide sequence ID" value="NM_101463.4"/>
</dbReference>
<dbReference type="SMR" id="Q9S9N9"/>
<dbReference type="FunCoup" id="Q9S9N9">
    <property type="interactions" value="305"/>
</dbReference>
<dbReference type="STRING" id="3702.Q9S9N9"/>
<dbReference type="iPTMnet" id="Q9S9N9"/>
<dbReference type="PaxDb" id="3702-AT1G15950.1"/>
<dbReference type="ProteomicsDB" id="224447">
    <molecule id="Q9S9N9-1"/>
</dbReference>
<dbReference type="EnsemblPlants" id="AT1G15950.1">
    <molecule id="Q9S9N9-1"/>
    <property type="protein sequence ID" value="AT1G15950.1"/>
    <property type="gene ID" value="AT1G15950"/>
</dbReference>
<dbReference type="EnsemblPlants" id="AT1G15950.3">
    <molecule id="Q9S9N9-1"/>
    <property type="protein sequence ID" value="AT1G15950.3"/>
    <property type="gene ID" value="AT1G15950"/>
</dbReference>
<dbReference type="GeneID" id="838165"/>
<dbReference type="Gramene" id="AT1G15950.1">
    <molecule id="Q9S9N9-1"/>
    <property type="protein sequence ID" value="AT1G15950.1"/>
    <property type="gene ID" value="AT1G15950"/>
</dbReference>
<dbReference type="Gramene" id="AT1G15950.3">
    <molecule id="Q9S9N9-1"/>
    <property type="protein sequence ID" value="AT1G15950.3"/>
    <property type="gene ID" value="AT1G15950"/>
</dbReference>
<dbReference type="KEGG" id="ath:AT1G15950"/>
<dbReference type="Araport" id="AT1G15950"/>
<dbReference type="TAIR" id="AT1G15950">
    <property type="gene designation" value="CCR1"/>
</dbReference>
<dbReference type="eggNOG" id="KOG1502">
    <property type="taxonomic scope" value="Eukaryota"/>
</dbReference>
<dbReference type="HOGENOM" id="CLU_007383_9_0_1"/>
<dbReference type="InParanoid" id="Q9S9N9"/>
<dbReference type="OrthoDB" id="2735536at2759"/>
<dbReference type="PhylomeDB" id="Q9S9N9"/>
<dbReference type="BioCyc" id="MetaCyc:AT1G15950-MONOMER"/>
<dbReference type="BRENDA" id="1.2.1.44">
    <property type="organism ID" value="399"/>
</dbReference>
<dbReference type="SABIO-RK" id="Q9S9N9"/>
<dbReference type="UniPathway" id="UPA00711"/>
<dbReference type="PRO" id="PR:Q9S9N9"/>
<dbReference type="Proteomes" id="UP000006548">
    <property type="component" value="Chromosome 1"/>
</dbReference>
<dbReference type="ExpressionAtlas" id="Q9S9N9">
    <property type="expression patterns" value="baseline and differential"/>
</dbReference>
<dbReference type="GO" id="GO:0016621">
    <property type="term" value="F:cinnamoyl-CoA reductase activity"/>
    <property type="evidence" value="ECO:0000314"/>
    <property type="project" value="TAIR"/>
</dbReference>
<dbReference type="GO" id="GO:0007623">
    <property type="term" value="P:circadian rhythm"/>
    <property type="evidence" value="ECO:0000270"/>
    <property type="project" value="UniProtKB"/>
</dbReference>
<dbReference type="GO" id="GO:0009809">
    <property type="term" value="P:lignin biosynthetic process"/>
    <property type="evidence" value="ECO:0000314"/>
    <property type="project" value="TAIR"/>
</dbReference>
<dbReference type="GO" id="GO:0009409">
    <property type="term" value="P:response to cold"/>
    <property type="evidence" value="ECO:0000270"/>
    <property type="project" value="TAIR"/>
</dbReference>
<dbReference type="CDD" id="cd08958">
    <property type="entry name" value="FR_SDR_e"/>
    <property type="match status" value="1"/>
</dbReference>
<dbReference type="FunFam" id="3.40.50.720:FF:000199">
    <property type="entry name" value="Cinnamoyl-CoA reductase 1"/>
    <property type="match status" value="1"/>
</dbReference>
<dbReference type="Gene3D" id="3.40.50.720">
    <property type="entry name" value="NAD(P)-binding Rossmann-like Domain"/>
    <property type="match status" value="1"/>
</dbReference>
<dbReference type="InterPro" id="IPR001509">
    <property type="entry name" value="Epimerase_deHydtase"/>
</dbReference>
<dbReference type="InterPro" id="IPR036291">
    <property type="entry name" value="NAD(P)-bd_dom_sf"/>
</dbReference>
<dbReference type="InterPro" id="IPR050425">
    <property type="entry name" value="NAD(P)_dehydrat-like"/>
</dbReference>
<dbReference type="PANTHER" id="PTHR10366:SF404">
    <property type="entry name" value="CINNAMOYL-COA REDUCTASE 1"/>
    <property type="match status" value="1"/>
</dbReference>
<dbReference type="PANTHER" id="PTHR10366">
    <property type="entry name" value="NAD DEPENDENT EPIMERASE/DEHYDRATASE"/>
    <property type="match status" value="1"/>
</dbReference>
<dbReference type="Pfam" id="PF01370">
    <property type="entry name" value="Epimerase"/>
    <property type="match status" value="1"/>
</dbReference>
<dbReference type="SUPFAM" id="SSF51735">
    <property type="entry name" value="NAD(P)-binding Rossmann-fold domains"/>
    <property type="match status" value="1"/>
</dbReference>
<evidence type="ECO:0000250" key="1">
    <source>
        <dbReference type="UniProtKB" id="A0A059TC02"/>
    </source>
</evidence>
<evidence type="ECO:0000250" key="2">
    <source>
        <dbReference type="UniProtKB" id="P51110"/>
    </source>
</evidence>
<evidence type="ECO:0000250" key="3">
    <source>
        <dbReference type="UniProtKB" id="Q12068"/>
    </source>
</evidence>
<evidence type="ECO:0000256" key="4">
    <source>
        <dbReference type="SAM" id="MobiDB-lite"/>
    </source>
</evidence>
<evidence type="ECO:0000269" key="5">
    <source>
    </source>
</evidence>
<evidence type="ECO:0000269" key="6">
    <source>
    </source>
</evidence>
<evidence type="ECO:0000269" key="7">
    <source>
    </source>
</evidence>
<evidence type="ECO:0000269" key="8">
    <source>
    </source>
</evidence>
<evidence type="ECO:0000269" key="9">
    <source>
    </source>
</evidence>
<evidence type="ECO:0000269" key="10">
    <source>
    </source>
</evidence>
<evidence type="ECO:0000269" key="11">
    <source>
    </source>
</evidence>
<evidence type="ECO:0000303" key="12">
    <source>
    </source>
</evidence>
<evidence type="ECO:0000303" key="13">
    <source>
    </source>
</evidence>
<evidence type="ECO:0000305" key="14"/>
<evidence type="ECO:0000312" key="15">
    <source>
        <dbReference type="Araport" id="AT1G15950"/>
    </source>
</evidence>
<evidence type="ECO:0000312" key="16">
    <source>
        <dbReference type="EMBL" id="AAF18492.1"/>
    </source>
</evidence>
<evidence type="ECO:0007744" key="17">
    <source>
    </source>
</evidence>
<comment type="function">
    <text evidence="5 6 7 8 9 10 11">Involved in the latter stages of lignin biosynthesis. Catalyzes one of the last steps of monolignol biosynthesis, the conversion of cinnamoyl-CoAs into their corresponding cinnamaldehydes.</text>
</comment>
<comment type="catalytic activity">
    <reaction evidence="6">
        <text>(E)-cinnamaldehyde + NADP(+) + CoA = (E)-cinnamoyl-CoA + NADPH + H(+)</text>
        <dbReference type="Rhea" id="RHEA:10620"/>
        <dbReference type="ChEBI" id="CHEBI:15378"/>
        <dbReference type="ChEBI" id="CHEBI:16731"/>
        <dbReference type="ChEBI" id="CHEBI:57252"/>
        <dbReference type="ChEBI" id="CHEBI:57287"/>
        <dbReference type="ChEBI" id="CHEBI:57783"/>
        <dbReference type="ChEBI" id="CHEBI:58349"/>
        <dbReference type="EC" id="1.2.1.44"/>
    </reaction>
</comment>
<comment type="biophysicochemical properties">
    <kinetics>
        <KM evidence="6 7 8">0.96 uM for feruloyl-CoA</KM>
        <KM evidence="6 7 8">2.27 uM for p-coumaroyl-CoA</KM>
        <KM evidence="6 7 8">6.32 uM for sinapoyl-CoA</KM>
        <KM evidence="6 7 8">12.5 uM for caffeoyl-CoA</KM>
    </kinetics>
</comment>
<comment type="pathway">
    <text>Aromatic compound metabolism; phenylpropanoid biosynthesis.</text>
</comment>
<comment type="alternative products">
    <event type="alternative splicing"/>
    <isoform>
        <id>Q9S9N9-1</id>
        <name>1</name>
        <sequence type="displayed"/>
    </isoform>
    <text>A number of isoforms are produced. According to EST sequences.</text>
</comment>
<comment type="tissue specificity">
    <text>Expressed in leaves, stems and flowers.</text>
</comment>
<comment type="disruption phenotype">
    <text evidence="5 8 9 10">Dwarf phenotype, delayed senescence, collapsed xylem and significant reduction of lignin content in ecotype Columbia (PubMed:19674336). Retarded growth, impaired upright growth, altered leaf morphology, dark green leaves, collapsed xylem and strong decrease in lignin content in ecotype Landsberg erecta (PubMed:11389761).</text>
</comment>
<comment type="similarity">
    <text evidence="14">Belongs to the NAD(P)-dependent epimerase/dehydratase family. Dihydroflavonol-4-reductase subfamily.</text>
</comment>
<organism>
    <name type="scientific">Arabidopsis thaliana</name>
    <name type="common">Mouse-ear cress</name>
    <dbReference type="NCBI Taxonomy" id="3702"/>
    <lineage>
        <taxon>Eukaryota</taxon>
        <taxon>Viridiplantae</taxon>
        <taxon>Streptophyta</taxon>
        <taxon>Embryophyta</taxon>
        <taxon>Tracheophyta</taxon>
        <taxon>Spermatophyta</taxon>
        <taxon>Magnoliopsida</taxon>
        <taxon>eudicotyledons</taxon>
        <taxon>Gunneridae</taxon>
        <taxon>Pentapetalae</taxon>
        <taxon>rosids</taxon>
        <taxon>malvids</taxon>
        <taxon>Brassicales</taxon>
        <taxon>Brassicaceae</taxon>
        <taxon>Camelineae</taxon>
        <taxon>Arabidopsis</taxon>
    </lineage>
</organism>
<accession>Q9S9N9</accession>
<accession>Q9FPM0</accession>
<gene>
    <name evidence="12" type="primary">CCR1</name>
    <name evidence="13" type="synonym">IRX4</name>
    <name evidence="15" type="ordered locus">At1g15950</name>
    <name evidence="16" type="ORF">T24D18.5</name>
</gene>
<proteinExistence type="evidence at protein level"/>
<feature type="chain" id="PRO_0000418212" description="Cinnamoyl-CoA reductase 1">
    <location>
        <begin position="1"/>
        <end position="344"/>
    </location>
</feature>
<feature type="region of interest" description="Disordered" evidence="4">
    <location>
        <begin position="317"/>
        <end position="344"/>
    </location>
</feature>
<feature type="active site" description="Proton donor" evidence="3">
    <location>
        <position position="165"/>
    </location>
</feature>
<feature type="binding site" evidence="2">
    <location>
        <begin position="17"/>
        <end position="23"/>
    </location>
    <ligand>
        <name>NADP(+)</name>
        <dbReference type="ChEBI" id="CHEBI:58349"/>
    </ligand>
</feature>
<feature type="binding site" evidence="2">
    <location>
        <position position="42"/>
    </location>
    <ligand>
        <name>NADP(+)</name>
        <dbReference type="ChEBI" id="CHEBI:58349"/>
    </ligand>
</feature>
<feature type="binding site" evidence="1">
    <location>
        <position position="48"/>
    </location>
    <ligand>
        <name>NADP(+)</name>
        <dbReference type="ChEBI" id="CHEBI:58349"/>
    </ligand>
</feature>
<feature type="binding site" evidence="2">
    <location>
        <begin position="68"/>
        <end position="69"/>
    </location>
    <ligand>
        <name>NADP(+)</name>
        <dbReference type="ChEBI" id="CHEBI:58349"/>
    </ligand>
</feature>
<feature type="binding site" evidence="2">
    <location>
        <begin position="88"/>
        <end position="90"/>
    </location>
    <ligand>
        <name>NADP(+)</name>
        <dbReference type="ChEBI" id="CHEBI:58349"/>
    </ligand>
</feature>
<feature type="binding site" evidence="1">
    <location>
        <position position="161"/>
    </location>
    <ligand>
        <name>NADP(+)</name>
        <dbReference type="ChEBI" id="CHEBI:58349"/>
    </ligand>
</feature>
<feature type="binding site" evidence="2">
    <location>
        <position position="165"/>
    </location>
    <ligand>
        <name>NADP(+)</name>
        <dbReference type="ChEBI" id="CHEBI:58349"/>
    </ligand>
</feature>
<feature type="binding site" evidence="2">
    <location>
        <begin position="188"/>
        <end position="191"/>
    </location>
    <ligand>
        <name>NADP(+)</name>
        <dbReference type="ChEBI" id="CHEBI:58349"/>
    </ligand>
</feature>
<feature type="binding site" evidence="2">
    <location>
        <position position="203"/>
    </location>
    <ligand>
        <name>NADP(+)</name>
        <dbReference type="ChEBI" id="CHEBI:58349"/>
    </ligand>
</feature>
<feature type="modified residue" description="Phosphoserine" evidence="17">
    <location>
        <position position="7"/>
    </location>
</feature>
<feature type="disulfide bond" evidence="1">
    <location>
        <begin position="154"/>
        <end position="162"/>
    </location>
</feature>
<feature type="sequence conflict" description="In Ref. 1; AAG46037." evidence="14" ref="1">
    <original>F</original>
    <variation>L</variation>
    <location>
        <position position="302"/>
    </location>
</feature>
<feature type="sequence conflict" description="In Ref. 1; AAG46037." evidence="14" ref="1">
    <original>L</original>
    <variation>F</variation>
    <location>
        <position position="309"/>
    </location>
</feature>
<reference key="1">
    <citation type="journal article" date="2001" name="Phytochemistry">
        <title>Two cinnamoyl-CoA reductase (CCR) genes from Arabidopsis thaliana are differentially expressed during development and in response to infection with pathogenic bacteria.</title>
        <authorList>
            <person name="Lauvergeat V."/>
            <person name="Lacomme C."/>
            <person name="Lacombe E."/>
            <person name="Lasserre E."/>
            <person name="Roby D."/>
            <person name="Grima-Pettenati J."/>
        </authorList>
    </citation>
    <scope>NUCLEOTIDE SEQUENCE [MRNA]</scope>
    <scope>FUNCTION</scope>
    <scope>CATALYTIC ACTIVITY</scope>
    <scope>BIOPHYSICOCHEMICAL PROPERTIES</scope>
    <source>
        <tissue>Seedling</tissue>
    </source>
</reference>
<reference key="2">
    <citation type="journal article" date="2005" name="Phytochemistry">
        <title>Reassessment of effects on lignification and vascular development in the irx4 Arabidopsis mutant.</title>
        <authorList>
            <person name="Patten A.M."/>
            <person name="Cardenas C.L."/>
            <person name="Cochrane F.C."/>
            <person name="Laskar D.D."/>
            <person name="Bedgar D.L."/>
            <person name="Davin L.B."/>
            <person name="Lewis N.G."/>
        </authorList>
    </citation>
    <scope>NUCLEOTIDE SEQUENCE [MRNA]</scope>
    <scope>FUNCTION</scope>
    <scope>BIOPHYSICOCHEMICAL PROPERTIES</scope>
    <scope>DISRUPTION PHENOTYPE</scope>
    <source>
        <strain>cv. Columbia</strain>
    </source>
</reference>
<reference key="3">
    <citation type="journal article" date="2000" name="Nature">
        <title>Sequence and analysis of chromosome 1 of the plant Arabidopsis thaliana.</title>
        <authorList>
            <person name="Theologis A."/>
            <person name="Ecker J.R."/>
            <person name="Palm C.J."/>
            <person name="Federspiel N.A."/>
            <person name="Kaul S."/>
            <person name="White O."/>
            <person name="Alonso J."/>
            <person name="Altafi H."/>
            <person name="Araujo R."/>
            <person name="Bowman C.L."/>
            <person name="Brooks S.Y."/>
            <person name="Buehler E."/>
            <person name="Chan A."/>
            <person name="Chao Q."/>
            <person name="Chen H."/>
            <person name="Cheuk R.F."/>
            <person name="Chin C.W."/>
            <person name="Chung M.K."/>
            <person name="Conn L."/>
            <person name="Conway A.B."/>
            <person name="Conway A.R."/>
            <person name="Creasy T.H."/>
            <person name="Dewar K."/>
            <person name="Dunn P."/>
            <person name="Etgu P."/>
            <person name="Feldblyum T.V."/>
            <person name="Feng J.-D."/>
            <person name="Fong B."/>
            <person name="Fujii C.Y."/>
            <person name="Gill J.E."/>
            <person name="Goldsmith A.D."/>
            <person name="Haas B."/>
            <person name="Hansen N.F."/>
            <person name="Hughes B."/>
            <person name="Huizar L."/>
            <person name="Hunter J.L."/>
            <person name="Jenkins J."/>
            <person name="Johnson-Hopson C."/>
            <person name="Khan S."/>
            <person name="Khaykin E."/>
            <person name="Kim C.J."/>
            <person name="Koo H.L."/>
            <person name="Kremenetskaia I."/>
            <person name="Kurtz D.B."/>
            <person name="Kwan A."/>
            <person name="Lam B."/>
            <person name="Langin-Hooper S."/>
            <person name="Lee A."/>
            <person name="Lee J.M."/>
            <person name="Lenz C.A."/>
            <person name="Li J.H."/>
            <person name="Li Y.-P."/>
            <person name="Lin X."/>
            <person name="Liu S.X."/>
            <person name="Liu Z.A."/>
            <person name="Luros J.S."/>
            <person name="Maiti R."/>
            <person name="Marziali A."/>
            <person name="Militscher J."/>
            <person name="Miranda M."/>
            <person name="Nguyen M."/>
            <person name="Nierman W.C."/>
            <person name="Osborne B.I."/>
            <person name="Pai G."/>
            <person name="Peterson J."/>
            <person name="Pham P.K."/>
            <person name="Rizzo M."/>
            <person name="Rooney T."/>
            <person name="Rowley D."/>
            <person name="Sakano H."/>
            <person name="Salzberg S.L."/>
            <person name="Schwartz J.R."/>
            <person name="Shinn P."/>
            <person name="Southwick A.M."/>
            <person name="Sun H."/>
            <person name="Tallon L.J."/>
            <person name="Tambunga G."/>
            <person name="Toriumi M.J."/>
            <person name="Town C.D."/>
            <person name="Utterback T."/>
            <person name="Van Aken S."/>
            <person name="Vaysberg M."/>
            <person name="Vysotskaia V.S."/>
            <person name="Walker M."/>
            <person name="Wu D."/>
            <person name="Yu G."/>
            <person name="Fraser C.M."/>
            <person name="Venter J.C."/>
            <person name="Davis R.W."/>
        </authorList>
    </citation>
    <scope>NUCLEOTIDE SEQUENCE [LARGE SCALE GENOMIC DNA]</scope>
    <source>
        <strain>cv. Columbia</strain>
    </source>
</reference>
<reference key="4">
    <citation type="journal article" date="2017" name="Plant J.">
        <title>Araport11: a complete reannotation of the Arabidopsis thaliana reference genome.</title>
        <authorList>
            <person name="Cheng C.Y."/>
            <person name="Krishnakumar V."/>
            <person name="Chan A.P."/>
            <person name="Thibaud-Nissen F."/>
            <person name="Schobel S."/>
            <person name="Town C.D."/>
        </authorList>
    </citation>
    <scope>GENOME REANNOTATION</scope>
    <source>
        <strain>cv. Columbia</strain>
    </source>
</reference>
<reference key="5">
    <citation type="journal article" date="2003" name="Science">
        <title>Empirical analysis of transcriptional activity in the Arabidopsis genome.</title>
        <authorList>
            <person name="Yamada K."/>
            <person name="Lim J."/>
            <person name="Dale J.M."/>
            <person name="Chen H."/>
            <person name="Shinn P."/>
            <person name="Palm C.J."/>
            <person name="Southwick A.M."/>
            <person name="Wu H.C."/>
            <person name="Kim C.J."/>
            <person name="Nguyen M."/>
            <person name="Pham P.K."/>
            <person name="Cheuk R.F."/>
            <person name="Karlin-Newmann G."/>
            <person name="Liu S.X."/>
            <person name="Lam B."/>
            <person name="Sakano H."/>
            <person name="Wu T."/>
            <person name="Yu G."/>
            <person name="Miranda M."/>
            <person name="Quach H.L."/>
            <person name="Tripp M."/>
            <person name="Chang C.H."/>
            <person name="Lee J.M."/>
            <person name="Toriumi M.J."/>
            <person name="Chan M.M."/>
            <person name="Tang C.C."/>
            <person name="Onodera C.S."/>
            <person name="Deng J.M."/>
            <person name="Akiyama K."/>
            <person name="Ansari Y."/>
            <person name="Arakawa T."/>
            <person name="Banh J."/>
            <person name="Banno F."/>
            <person name="Bowser L."/>
            <person name="Brooks S.Y."/>
            <person name="Carninci P."/>
            <person name="Chao Q."/>
            <person name="Choy N."/>
            <person name="Enju A."/>
            <person name="Goldsmith A.D."/>
            <person name="Gurjal M."/>
            <person name="Hansen N.F."/>
            <person name="Hayashizaki Y."/>
            <person name="Johnson-Hopson C."/>
            <person name="Hsuan V.W."/>
            <person name="Iida K."/>
            <person name="Karnes M."/>
            <person name="Khan S."/>
            <person name="Koesema E."/>
            <person name="Ishida J."/>
            <person name="Jiang P.X."/>
            <person name="Jones T."/>
            <person name="Kawai J."/>
            <person name="Kamiya A."/>
            <person name="Meyers C."/>
            <person name="Nakajima M."/>
            <person name="Narusaka M."/>
            <person name="Seki M."/>
            <person name="Sakurai T."/>
            <person name="Satou M."/>
            <person name="Tamse R."/>
            <person name="Vaysberg M."/>
            <person name="Wallender E.K."/>
            <person name="Wong C."/>
            <person name="Yamamura Y."/>
            <person name="Yuan S."/>
            <person name="Shinozaki K."/>
            <person name="Davis R.W."/>
            <person name="Theologis A."/>
            <person name="Ecker J.R."/>
        </authorList>
    </citation>
    <scope>NUCLEOTIDE SEQUENCE [LARGE SCALE MRNA]</scope>
    <source>
        <strain>cv. Columbia</strain>
    </source>
</reference>
<reference key="6">
    <citation type="submission" date="2006-07" db="EMBL/GenBank/DDBJ databases">
        <title>Large-scale analysis of RIKEN Arabidopsis full-length (RAFL) cDNAs.</title>
        <authorList>
            <person name="Totoki Y."/>
            <person name="Seki M."/>
            <person name="Ishida J."/>
            <person name="Nakajima M."/>
            <person name="Enju A."/>
            <person name="Kamiya A."/>
            <person name="Narusaka M."/>
            <person name="Shin-i T."/>
            <person name="Nakagawa M."/>
            <person name="Sakamoto N."/>
            <person name="Oishi K."/>
            <person name="Kohara Y."/>
            <person name="Kobayashi M."/>
            <person name="Toyoda A."/>
            <person name="Sakaki Y."/>
            <person name="Sakurai T."/>
            <person name="Iida K."/>
            <person name="Akiyama K."/>
            <person name="Satou M."/>
            <person name="Toyoda T."/>
            <person name="Konagaya A."/>
            <person name="Carninci P."/>
            <person name="Kawai J."/>
            <person name="Hayashizaki Y."/>
            <person name="Shinozaki K."/>
        </authorList>
    </citation>
    <scope>NUCLEOTIDE SEQUENCE [LARGE SCALE MRNA]</scope>
    <source>
        <strain>cv. Columbia</strain>
    </source>
</reference>
<reference key="7">
    <citation type="submission" date="2002-03" db="EMBL/GenBank/DDBJ databases">
        <title>Full-length cDNA from Arabidopsis thaliana.</title>
        <authorList>
            <person name="Brover V.V."/>
            <person name="Troukhan M.E."/>
            <person name="Alexandrov N.A."/>
            <person name="Lu Y.-P."/>
            <person name="Flavell R.B."/>
            <person name="Feldmann K.A."/>
        </authorList>
    </citation>
    <scope>NUCLEOTIDE SEQUENCE [LARGE SCALE MRNA]</scope>
</reference>
<reference key="8">
    <citation type="journal article" date="2001" name="Plant J.">
        <title>Cloning and characterization of irregular xylem4 (irx4): a severely lignin-deficient mutant of Arabidopsis.</title>
        <authorList>
            <person name="Jones L."/>
            <person name="Ennos A.R."/>
            <person name="Turner S.R."/>
        </authorList>
    </citation>
    <scope>FUNCTION</scope>
    <scope>DISRUPTION PHENOTYPE</scope>
    <source>
        <strain>cv. Landsberg erecta</strain>
    </source>
</reference>
<reference key="9">
    <citation type="journal article" date="2005" name="Plant Physiol. Biochem.">
        <title>Kinetic and inhibition studies of cinnamoyl-CoA reductase 1 from Arabidopsis thaliana.</title>
        <authorList>
            <person name="Baltas M."/>
            <person name="Lapeyre C."/>
            <person name="Bedos-Belval F."/>
            <person name="Maturano M."/>
            <person name="Saint-Aguet P."/>
            <person name="Roussel L."/>
            <person name="Duran H."/>
            <person name="Grima-Pettenati J."/>
        </authorList>
    </citation>
    <scope>FUNCTION</scope>
    <scope>BIOPHYSICOCHEMICAL PROPERTIES</scope>
</reference>
<reference key="10">
    <citation type="journal article" date="2008" name="Planta">
        <title>Redirection of the phenylpropanoid pathway to feruloyl malate in Arabidopsis mutants deficient for cinnamoyl-CoA reductase 1.</title>
        <authorList>
            <person name="Mir Derikvand M."/>
            <person name="Sierra J.B."/>
            <person name="Ruel K."/>
            <person name="Pollet B."/>
            <person name="Do C.T."/>
            <person name="Thevenin J."/>
            <person name="Buffard D."/>
            <person name="Jouanin L."/>
            <person name="Lapierre C."/>
        </authorList>
    </citation>
    <scope>FUNCTION</scope>
    <scope>DISRUPTION PHENOTYPE</scope>
    <source>
        <strain>cv. Columbia</strain>
    </source>
</reference>
<reference key="11">
    <citation type="journal article" date="2009" name="New Phytol.">
        <title>Impact of CCR1 silencing on the assembly of lignified secondary walls in Arabidopsis thaliana.</title>
        <authorList>
            <person name="Ruel K."/>
            <person name="Berrio-Sierra J."/>
            <person name="Derikvand M.M."/>
            <person name="Pollet B."/>
            <person name="Thevenin J."/>
            <person name="Lapierre C."/>
            <person name="Jouanin L."/>
            <person name="Joseleau J.P."/>
        </authorList>
    </citation>
    <scope>FUNCTION</scope>
</reference>
<reference key="12">
    <citation type="journal article" date="2009" name="Plant Physiol.">
        <title>Large-scale Arabidopsis phosphoproteome profiling reveals novel chloroplast kinase substrates and phosphorylation networks.</title>
        <authorList>
            <person name="Reiland S."/>
            <person name="Messerli G."/>
            <person name="Baerenfaller K."/>
            <person name="Gerrits B."/>
            <person name="Endler A."/>
            <person name="Grossmann J."/>
            <person name="Gruissem W."/>
            <person name="Baginsky S."/>
        </authorList>
    </citation>
    <scope>PHOSPHORYLATION [LARGE SCALE ANALYSIS] AT SER-7</scope>
    <scope>IDENTIFICATION BY MASS SPECTROMETRY [LARGE SCALE ANALYSIS]</scope>
</reference>
<reference key="13">
    <citation type="journal article" date="2011" name="Mol. Plant">
        <title>The simultaneous repression of CCR and CAD, two enzymes of the lignin biosynthetic pathway, results in sterility and dwarfism in Arabidopsis thaliana.</title>
        <authorList>
            <person name="Thevenin J."/>
            <person name="Pollet B."/>
            <person name="Letarnec B."/>
            <person name="Saulnier L."/>
            <person name="Gissot L."/>
            <person name="Maia-Grondard A."/>
            <person name="Lapierre C."/>
            <person name="Jouanin L."/>
        </authorList>
    </citation>
    <scope>FUNCTION</scope>
</reference>